<evidence type="ECO:0000250" key="1">
    <source>
        <dbReference type="UniProtKB" id="O48814"/>
    </source>
</evidence>
<evidence type="ECO:0000255" key="2"/>
<evidence type="ECO:0000255" key="3">
    <source>
        <dbReference type="PROSITE-ProRule" id="PRU00159"/>
    </source>
</evidence>
<evidence type="ECO:0000255" key="4">
    <source>
        <dbReference type="PROSITE-ProRule" id="PRU10027"/>
    </source>
</evidence>
<evidence type="ECO:0000305" key="5"/>
<feature type="signal peptide" evidence="2">
    <location>
        <begin position="1"/>
        <end position="23"/>
    </location>
</feature>
<feature type="chain" id="PRO_0000387566" description="Probable LRR receptor-like serine/threonine-protein kinase At5g59680">
    <location>
        <begin position="24"/>
        <end position="887"/>
    </location>
</feature>
<feature type="topological domain" description="Extracellular" evidence="2">
    <location>
        <begin position="25"/>
        <end position="510"/>
    </location>
</feature>
<feature type="transmembrane region" description="Helical" evidence="2">
    <location>
        <begin position="511"/>
        <end position="531"/>
    </location>
</feature>
<feature type="topological domain" description="Cytoplasmic" evidence="2">
    <location>
        <begin position="532"/>
        <end position="887"/>
    </location>
</feature>
<feature type="repeat" description="LRR 1">
    <location>
        <begin position="411"/>
        <end position="434"/>
    </location>
</feature>
<feature type="repeat" description="LRR 2">
    <location>
        <begin position="435"/>
        <end position="457"/>
    </location>
</feature>
<feature type="repeat" description="LRR 3">
    <location>
        <begin position="459"/>
        <end position="481"/>
    </location>
</feature>
<feature type="domain" description="Protein kinase" evidence="3">
    <location>
        <begin position="580"/>
        <end position="853"/>
    </location>
</feature>
<feature type="active site" description="Proton acceptor" evidence="3 4">
    <location>
        <position position="705"/>
    </location>
</feature>
<feature type="binding site" evidence="3">
    <location>
        <begin position="586"/>
        <end position="594"/>
    </location>
    <ligand>
        <name>ATP</name>
        <dbReference type="ChEBI" id="CHEBI:30616"/>
    </ligand>
</feature>
<feature type="binding site" evidence="3">
    <location>
        <position position="608"/>
    </location>
    <ligand>
        <name>ATP</name>
        <dbReference type="ChEBI" id="CHEBI:30616"/>
    </ligand>
</feature>
<feature type="modified residue" description="Phosphothreonine" evidence="1">
    <location>
        <position position="571"/>
    </location>
</feature>
<feature type="modified residue" description="Phosphotyrosine" evidence="1">
    <location>
        <position position="653"/>
    </location>
</feature>
<feature type="modified residue" description="Phosphoserine" evidence="1">
    <location>
        <position position="739"/>
    </location>
</feature>
<feature type="modified residue" description="Phosphothreonine" evidence="1">
    <location>
        <position position="740"/>
    </location>
</feature>
<feature type="modified residue" description="Phosphothreonine" evidence="1">
    <location>
        <position position="745"/>
    </location>
</feature>
<feature type="modified residue" description="Phosphotyrosine" evidence="1">
    <location>
        <position position="753"/>
    </location>
</feature>
<feature type="glycosylation site" description="N-linked (GlcNAc...) asparagine" evidence="2">
    <location>
        <position position="143"/>
    </location>
</feature>
<feature type="glycosylation site" description="N-linked (GlcNAc...) asparagine" evidence="2">
    <location>
        <position position="230"/>
    </location>
</feature>
<feature type="glycosylation site" description="N-linked (GlcNAc...) asparagine" evidence="2">
    <location>
        <position position="256"/>
    </location>
</feature>
<feature type="glycosylation site" description="N-linked (GlcNAc...) asparagine" evidence="2">
    <location>
        <position position="289"/>
    </location>
</feature>
<feature type="glycosylation site" description="N-linked (GlcNAc...) asparagine" evidence="2">
    <location>
        <position position="338"/>
    </location>
</feature>
<feature type="glycosylation site" description="N-linked (GlcNAc...) asparagine" evidence="2">
    <location>
        <position position="363"/>
    </location>
</feature>
<feature type="glycosylation site" description="N-linked (GlcNAc...) asparagine" evidence="2">
    <location>
        <position position="400"/>
    </location>
</feature>
<feature type="glycosylation site" description="N-linked (GlcNAc...) asparagine" evidence="2">
    <location>
        <position position="416"/>
    </location>
</feature>
<feature type="glycosylation site" description="N-linked (GlcNAc...) asparagine" evidence="2">
    <location>
        <position position="432"/>
    </location>
</feature>
<feature type="glycosylation site" description="N-linked (GlcNAc...) asparagine" evidence="2">
    <location>
        <position position="445"/>
    </location>
</feature>
<feature type="glycosylation site" description="N-linked (GlcNAc...) asparagine" evidence="2">
    <location>
        <position position="464"/>
    </location>
</feature>
<feature type="glycosylation site" description="N-linked (GlcNAc...) asparagine" evidence="2">
    <location>
        <position position="471"/>
    </location>
</feature>
<organism>
    <name type="scientific">Arabidopsis thaliana</name>
    <name type="common">Mouse-ear cress</name>
    <dbReference type="NCBI Taxonomy" id="3702"/>
    <lineage>
        <taxon>Eukaryota</taxon>
        <taxon>Viridiplantae</taxon>
        <taxon>Streptophyta</taxon>
        <taxon>Embryophyta</taxon>
        <taxon>Tracheophyta</taxon>
        <taxon>Spermatophyta</taxon>
        <taxon>Magnoliopsida</taxon>
        <taxon>eudicotyledons</taxon>
        <taxon>Gunneridae</taxon>
        <taxon>Pentapetalae</taxon>
        <taxon>rosids</taxon>
        <taxon>malvids</taxon>
        <taxon>Brassicales</taxon>
        <taxon>Brassicaceae</taxon>
        <taxon>Camelineae</taxon>
        <taxon>Arabidopsis</taxon>
    </lineage>
</organism>
<protein>
    <recommendedName>
        <fullName>Probable LRR receptor-like serine/threonine-protein kinase At5g59680</fullName>
        <ecNumber>2.7.11.1</ecNumber>
    </recommendedName>
</protein>
<dbReference type="EC" id="2.7.11.1"/>
<dbReference type="EMBL" id="AB006705">
    <property type="protein sequence ID" value="BAB09506.1"/>
    <property type="molecule type" value="Genomic_DNA"/>
</dbReference>
<dbReference type="EMBL" id="CP002688">
    <property type="protein sequence ID" value="AED97219.1"/>
    <property type="molecule type" value="Genomic_DNA"/>
</dbReference>
<dbReference type="EMBL" id="FJ708808">
    <property type="protein sequence ID" value="ACN59399.1"/>
    <property type="molecule type" value="mRNA"/>
</dbReference>
<dbReference type="RefSeq" id="NP_200776.2">
    <property type="nucleotide sequence ID" value="NM_125360.3"/>
</dbReference>
<dbReference type="SMR" id="Q9FN93"/>
<dbReference type="BioGRID" id="21333">
    <property type="interactions" value="32"/>
</dbReference>
<dbReference type="FunCoup" id="Q9FN93">
    <property type="interactions" value="41"/>
</dbReference>
<dbReference type="IntAct" id="Q9FN93">
    <property type="interactions" value="35"/>
</dbReference>
<dbReference type="STRING" id="3702.Q9FN93"/>
<dbReference type="GlyGen" id="Q9FN93">
    <property type="glycosylation" value="13 sites"/>
</dbReference>
<dbReference type="iPTMnet" id="Q9FN93"/>
<dbReference type="PaxDb" id="3702-AT5G59680.1"/>
<dbReference type="ProteomicsDB" id="243165"/>
<dbReference type="EnsemblPlants" id="AT5G59680.1">
    <property type="protein sequence ID" value="AT5G59680.1"/>
    <property type="gene ID" value="AT5G59680"/>
</dbReference>
<dbReference type="GeneID" id="836089"/>
<dbReference type="Gramene" id="AT5G59680.1">
    <property type="protein sequence ID" value="AT5G59680.1"/>
    <property type="gene ID" value="AT5G59680"/>
</dbReference>
<dbReference type="KEGG" id="ath:AT5G59680"/>
<dbReference type="Araport" id="AT5G59680"/>
<dbReference type="TAIR" id="AT5G59680"/>
<dbReference type="eggNOG" id="ENOG502QQCZ">
    <property type="taxonomic scope" value="Eukaryota"/>
</dbReference>
<dbReference type="HOGENOM" id="CLU_000288_41_1_1"/>
<dbReference type="InParanoid" id="Q9FN93"/>
<dbReference type="OMA" id="WATIDLH"/>
<dbReference type="OrthoDB" id="2017114at2759"/>
<dbReference type="PhylomeDB" id="Q9FN93"/>
<dbReference type="PRO" id="PR:Q9FN93"/>
<dbReference type="Proteomes" id="UP000006548">
    <property type="component" value="Chromosome 5"/>
</dbReference>
<dbReference type="ExpressionAtlas" id="Q9FN93">
    <property type="expression patterns" value="baseline and differential"/>
</dbReference>
<dbReference type="GO" id="GO:0016020">
    <property type="term" value="C:membrane"/>
    <property type="evidence" value="ECO:0007669"/>
    <property type="project" value="UniProtKB-SubCell"/>
</dbReference>
<dbReference type="GO" id="GO:0005524">
    <property type="term" value="F:ATP binding"/>
    <property type="evidence" value="ECO:0007669"/>
    <property type="project" value="UniProtKB-KW"/>
</dbReference>
<dbReference type="GO" id="GO:0106310">
    <property type="term" value="F:protein serine kinase activity"/>
    <property type="evidence" value="ECO:0007669"/>
    <property type="project" value="RHEA"/>
</dbReference>
<dbReference type="GO" id="GO:0004674">
    <property type="term" value="F:protein serine/threonine kinase activity"/>
    <property type="evidence" value="ECO:0007669"/>
    <property type="project" value="UniProtKB-KW"/>
</dbReference>
<dbReference type="FunFam" id="3.80.10.10:FF:000129">
    <property type="entry name" value="Leucine-rich repeat receptor-like kinase"/>
    <property type="match status" value="1"/>
</dbReference>
<dbReference type="FunFam" id="3.30.200.20:FF:000394">
    <property type="entry name" value="Leucine-rich repeat receptor-like protein kinase"/>
    <property type="match status" value="1"/>
</dbReference>
<dbReference type="FunFam" id="1.10.510.10:FF:000146">
    <property type="entry name" value="LRR receptor-like serine/threonine-protein kinase IOS1"/>
    <property type="match status" value="1"/>
</dbReference>
<dbReference type="Gene3D" id="3.30.200.20">
    <property type="entry name" value="Phosphorylase Kinase, domain 1"/>
    <property type="match status" value="1"/>
</dbReference>
<dbReference type="Gene3D" id="3.80.10.10">
    <property type="entry name" value="Ribonuclease Inhibitor"/>
    <property type="match status" value="1"/>
</dbReference>
<dbReference type="Gene3D" id="1.10.510.10">
    <property type="entry name" value="Transferase(Phosphotransferase) domain 1"/>
    <property type="match status" value="1"/>
</dbReference>
<dbReference type="InterPro" id="IPR011009">
    <property type="entry name" value="Kinase-like_dom_sf"/>
</dbReference>
<dbReference type="InterPro" id="IPR001611">
    <property type="entry name" value="Leu-rich_rpt"/>
</dbReference>
<dbReference type="InterPro" id="IPR032675">
    <property type="entry name" value="LRR_dom_sf"/>
</dbReference>
<dbReference type="InterPro" id="IPR024788">
    <property type="entry name" value="Malectin-like_Carb-bd_dom"/>
</dbReference>
<dbReference type="InterPro" id="IPR000719">
    <property type="entry name" value="Prot_kinase_dom"/>
</dbReference>
<dbReference type="InterPro" id="IPR017441">
    <property type="entry name" value="Protein_kinase_ATP_BS"/>
</dbReference>
<dbReference type="InterPro" id="IPR008271">
    <property type="entry name" value="Ser/Thr_kinase_AS"/>
</dbReference>
<dbReference type="PANTHER" id="PTHR45631">
    <property type="entry name" value="OS07G0107800 PROTEIN-RELATED"/>
    <property type="match status" value="1"/>
</dbReference>
<dbReference type="PANTHER" id="PTHR45631:SF133">
    <property type="entry name" value="PROTEIN KINASE DOMAIN-CONTAINING PROTEIN"/>
    <property type="match status" value="1"/>
</dbReference>
<dbReference type="Pfam" id="PF13855">
    <property type="entry name" value="LRR_8"/>
    <property type="match status" value="1"/>
</dbReference>
<dbReference type="Pfam" id="PF12819">
    <property type="entry name" value="Malectin_like"/>
    <property type="match status" value="1"/>
</dbReference>
<dbReference type="Pfam" id="PF00069">
    <property type="entry name" value="Pkinase"/>
    <property type="match status" value="1"/>
</dbReference>
<dbReference type="SMART" id="SM00220">
    <property type="entry name" value="S_TKc"/>
    <property type="match status" value="1"/>
</dbReference>
<dbReference type="SUPFAM" id="SSF52058">
    <property type="entry name" value="L domain-like"/>
    <property type="match status" value="1"/>
</dbReference>
<dbReference type="SUPFAM" id="SSF56112">
    <property type="entry name" value="Protein kinase-like (PK-like)"/>
    <property type="match status" value="1"/>
</dbReference>
<dbReference type="PROSITE" id="PS00107">
    <property type="entry name" value="PROTEIN_KINASE_ATP"/>
    <property type="match status" value="1"/>
</dbReference>
<dbReference type="PROSITE" id="PS50011">
    <property type="entry name" value="PROTEIN_KINASE_DOM"/>
    <property type="match status" value="1"/>
</dbReference>
<dbReference type="PROSITE" id="PS00108">
    <property type="entry name" value="PROTEIN_KINASE_ST"/>
    <property type="match status" value="1"/>
</dbReference>
<accession>Q9FN93</accession>
<name>Y5596_ARATH</name>
<proteinExistence type="evidence at protein level"/>
<sequence>MERSLELLLLLIRTLAIIHISQAQSQQGFISLDCGLPANEPSPYTEPRTGLQFSSDAAFIQSGKIGRIQANLEADFLKPSTTMRYFPDGKRNCYNLNVEKGRNHLIRARFVYGNYDGRDTGPKFDLYLGPNPWATIDLAKQVNGTRPEIMHIPTSNKLQVCLVKTGETTPLISVLEVRPMGSGTYLTKSGSLKLYYREYFSKSDSSLRYPDDIYDRQWTSFFDTEWTQINTTSDVGNSNDYKPPKVALTTAAIPTNASAPLTNEWSSVNPDEQYYVYAHFSEIQELQANETREFNMLLNGKLFFGPVVPPKLAISTILSVSPNTCEGGECNLQLIRTNRSTLPPLLNAYEVYKVIQFPQLETNETDVSAVKNIQATYELSRINWQSDPCVPQQFMWDGLNCSITDITTPPRITTLNLSSSGLTGTITAAIQNLTTLEKLDLSNNNLTGEVPEFLSNMKSLLVINLSGNDLNGTIPQSLQRKGLELLYQGNPRLISPGSTETKSGKSFPVTIVASVGSAAILIVVLVLVLFLRKKKPSAVEVVLPRPSRPTMNVPYANSPEPSIEMKKRKFTYSEVTKMTNNFGRVVGEGGFGVVCHGTVNGSEQVAVKLLSQSSTQGYKEFKAEVDLLLRVHHTNLVSLVGYCDEGDHLALIYEFVPNGDLRQHLSGKGGKPIVNWGTRLRIAAEAALGLEYLHIGCTPPMVHRDVKTTNILLDEHYKAKLADFGLSRSFPVGGESHVSTVIAGTPGYLDPEYYHTSRLSEKSDVYSFGIVLLEMITNQAVIDRNRRKSHITQWVGSELNGGDIAKIMDLKLNGDYDSRSAWRALELAMSCADPTSARRPTMSHVVIELKECLVSENSRRNMSRGMDTLSSPEVSMIFDAEMIPRAR</sequence>
<keyword id="KW-0067">ATP-binding</keyword>
<keyword id="KW-0325">Glycoprotein</keyword>
<keyword id="KW-0418">Kinase</keyword>
<keyword id="KW-0433">Leucine-rich repeat</keyword>
<keyword id="KW-0472">Membrane</keyword>
<keyword id="KW-0547">Nucleotide-binding</keyword>
<keyword id="KW-0597">Phosphoprotein</keyword>
<keyword id="KW-0675">Receptor</keyword>
<keyword id="KW-1185">Reference proteome</keyword>
<keyword id="KW-0677">Repeat</keyword>
<keyword id="KW-0723">Serine/threonine-protein kinase</keyword>
<keyword id="KW-0732">Signal</keyword>
<keyword id="KW-0808">Transferase</keyword>
<keyword id="KW-0812">Transmembrane</keyword>
<keyword id="KW-1133">Transmembrane helix</keyword>
<reference key="1">
    <citation type="journal article" date="1997" name="DNA Res.">
        <title>Structural analysis of Arabidopsis thaliana chromosome 5. II. Sequence features of the regions of 1,044,062 bp covered by thirteen physically assigned P1 clones.</title>
        <authorList>
            <person name="Kotani H."/>
            <person name="Nakamura Y."/>
            <person name="Sato S."/>
            <person name="Kaneko T."/>
            <person name="Asamizu E."/>
            <person name="Miyajima N."/>
            <person name="Tabata S."/>
        </authorList>
    </citation>
    <scope>NUCLEOTIDE SEQUENCE [LARGE SCALE GENOMIC DNA]</scope>
    <source>
        <strain>cv. Columbia</strain>
    </source>
</reference>
<reference key="2">
    <citation type="journal article" date="2017" name="Plant J.">
        <title>Araport11: a complete reannotation of the Arabidopsis thaliana reference genome.</title>
        <authorList>
            <person name="Cheng C.Y."/>
            <person name="Krishnakumar V."/>
            <person name="Chan A.P."/>
            <person name="Thibaud-Nissen F."/>
            <person name="Schobel S."/>
            <person name="Town C.D."/>
        </authorList>
    </citation>
    <scope>GENOME REANNOTATION</scope>
    <source>
        <strain>cv. Columbia</strain>
    </source>
</reference>
<reference key="3">
    <citation type="journal article" date="2010" name="BMC Genomics">
        <title>Genome-wide cloning and sequence analysis of leucine-rich repeat receptor-like protein kinase genes in Arabidopsis thaliana.</title>
        <authorList>
            <person name="Gou X."/>
            <person name="He K."/>
            <person name="Yang H."/>
            <person name="Yuan T."/>
            <person name="Lin H."/>
            <person name="Clouse S.D."/>
            <person name="Li J."/>
        </authorList>
    </citation>
    <scope>NUCLEOTIDE SEQUENCE [LARGE SCALE MRNA]</scope>
    <source>
        <strain>cv. Columbia</strain>
    </source>
</reference>
<gene>
    <name type="ordered locus">At5g59680</name>
    <name type="ORF">MTH12.14</name>
</gene>
<comment type="catalytic activity">
    <reaction>
        <text>L-seryl-[protein] + ATP = O-phospho-L-seryl-[protein] + ADP + H(+)</text>
        <dbReference type="Rhea" id="RHEA:17989"/>
        <dbReference type="Rhea" id="RHEA-COMP:9863"/>
        <dbReference type="Rhea" id="RHEA-COMP:11604"/>
        <dbReference type="ChEBI" id="CHEBI:15378"/>
        <dbReference type="ChEBI" id="CHEBI:29999"/>
        <dbReference type="ChEBI" id="CHEBI:30616"/>
        <dbReference type="ChEBI" id="CHEBI:83421"/>
        <dbReference type="ChEBI" id="CHEBI:456216"/>
        <dbReference type="EC" id="2.7.11.1"/>
    </reaction>
</comment>
<comment type="catalytic activity">
    <reaction>
        <text>L-threonyl-[protein] + ATP = O-phospho-L-threonyl-[protein] + ADP + H(+)</text>
        <dbReference type="Rhea" id="RHEA:46608"/>
        <dbReference type="Rhea" id="RHEA-COMP:11060"/>
        <dbReference type="Rhea" id="RHEA-COMP:11605"/>
        <dbReference type="ChEBI" id="CHEBI:15378"/>
        <dbReference type="ChEBI" id="CHEBI:30013"/>
        <dbReference type="ChEBI" id="CHEBI:30616"/>
        <dbReference type="ChEBI" id="CHEBI:61977"/>
        <dbReference type="ChEBI" id="CHEBI:456216"/>
        <dbReference type="EC" id="2.7.11.1"/>
    </reaction>
</comment>
<comment type="interaction">
    <interactant intactId="EBI-20653513">
        <id>Q9FN93</id>
    </interactant>
    <interactant intactId="EBI-16955335">
        <id>C0LGS3</id>
        <label>At4g37250</label>
    </interactant>
    <organismsDiffer>false</organismsDiffer>
    <experiments>2</experiments>
</comment>
<comment type="interaction">
    <interactant intactId="EBI-20653513">
        <id>Q9FN93</id>
    </interactant>
    <interactant intactId="EBI-17071528">
        <id>Q9FRI1</id>
        <label>LRR-RLK</label>
    </interactant>
    <organismsDiffer>false</organismsDiffer>
    <experiments>2</experiments>
</comment>
<comment type="interaction">
    <interactant intactId="EBI-20653513">
        <id>Q9FN93</id>
    </interactant>
    <interactant intactId="EBI-1555537">
        <id>Q94AG2</id>
        <label>SERK1</label>
    </interactant>
    <organismsDiffer>false</organismsDiffer>
    <experiments>2</experiments>
</comment>
<comment type="subcellular location">
    <subcellularLocation>
        <location evidence="5">Membrane</location>
        <topology evidence="5">Single-pass type I membrane protein</topology>
    </subcellularLocation>
</comment>
<comment type="similarity">
    <text evidence="3">Belongs to the protein kinase superfamily. Ser/Thr protein kinase family.</text>
</comment>